<gene>
    <name evidence="1" type="primary">ribBA</name>
    <name type="ordered locus">PGN_0643</name>
</gene>
<feature type="chain" id="PRO_1000165256" description="Riboflavin biosynthesis protein RibBA">
    <location>
        <begin position="1"/>
        <end position="405"/>
    </location>
</feature>
<feature type="region of interest" description="DHBP synthase">
    <location>
        <begin position="1"/>
        <end position="205"/>
    </location>
</feature>
<feature type="region of interest" description="GTP cyclohydrolase II">
    <location>
        <begin position="206"/>
        <end position="405"/>
    </location>
</feature>
<feature type="active site" description="Proton acceptor; for GTP cyclohydrolase activity" evidence="1">
    <location>
        <position position="333"/>
    </location>
</feature>
<feature type="active site" description="Nucleophile; for GTP cyclohydrolase activity" evidence="1">
    <location>
        <position position="335"/>
    </location>
</feature>
<feature type="binding site" evidence="1">
    <location>
        <begin position="30"/>
        <end position="31"/>
    </location>
    <ligand>
        <name>D-ribulose 5-phosphate</name>
        <dbReference type="ChEBI" id="CHEBI:58121"/>
    </ligand>
</feature>
<feature type="binding site" evidence="1">
    <location>
        <position position="31"/>
    </location>
    <ligand>
        <name>Mg(2+)</name>
        <dbReference type="ChEBI" id="CHEBI:18420"/>
        <label>1</label>
    </ligand>
</feature>
<feature type="binding site" evidence="1">
    <location>
        <position position="31"/>
    </location>
    <ligand>
        <name>Mg(2+)</name>
        <dbReference type="ChEBI" id="CHEBI:18420"/>
        <label>2</label>
    </ligand>
</feature>
<feature type="binding site" evidence="1">
    <location>
        <position position="35"/>
    </location>
    <ligand>
        <name>D-ribulose 5-phosphate</name>
        <dbReference type="ChEBI" id="CHEBI:58121"/>
    </ligand>
</feature>
<feature type="binding site" evidence="1">
    <location>
        <begin position="144"/>
        <end position="148"/>
    </location>
    <ligand>
        <name>D-ribulose 5-phosphate</name>
        <dbReference type="ChEBI" id="CHEBI:58121"/>
    </ligand>
</feature>
<feature type="binding site" evidence="1">
    <location>
        <position position="147"/>
    </location>
    <ligand>
        <name>Mg(2+)</name>
        <dbReference type="ChEBI" id="CHEBI:18420"/>
        <label>2</label>
    </ligand>
</feature>
<feature type="binding site" evidence="1">
    <location>
        <position position="168"/>
    </location>
    <ligand>
        <name>D-ribulose 5-phosphate</name>
        <dbReference type="ChEBI" id="CHEBI:58121"/>
    </ligand>
</feature>
<feature type="binding site" evidence="1">
    <location>
        <begin position="256"/>
        <end position="260"/>
    </location>
    <ligand>
        <name>GTP</name>
        <dbReference type="ChEBI" id="CHEBI:37565"/>
    </ligand>
</feature>
<feature type="binding site" evidence="1">
    <location>
        <position position="261"/>
    </location>
    <ligand>
        <name>Zn(2+)</name>
        <dbReference type="ChEBI" id="CHEBI:29105"/>
        <note>catalytic</note>
    </ligand>
</feature>
<feature type="binding site" evidence="1">
    <location>
        <position position="272"/>
    </location>
    <ligand>
        <name>Zn(2+)</name>
        <dbReference type="ChEBI" id="CHEBI:29105"/>
        <note>catalytic</note>
    </ligand>
</feature>
<feature type="binding site" evidence="1">
    <location>
        <position position="274"/>
    </location>
    <ligand>
        <name>Zn(2+)</name>
        <dbReference type="ChEBI" id="CHEBI:29105"/>
        <note>catalytic</note>
    </ligand>
</feature>
<feature type="binding site" evidence="1">
    <location>
        <position position="277"/>
    </location>
    <ligand>
        <name>GTP</name>
        <dbReference type="ChEBI" id="CHEBI:37565"/>
    </ligand>
</feature>
<feature type="binding site" evidence="1">
    <location>
        <begin position="299"/>
        <end position="301"/>
    </location>
    <ligand>
        <name>GTP</name>
        <dbReference type="ChEBI" id="CHEBI:37565"/>
    </ligand>
</feature>
<feature type="binding site" evidence="1">
    <location>
        <position position="321"/>
    </location>
    <ligand>
        <name>GTP</name>
        <dbReference type="ChEBI" id="CHEBI:37565"/>
    </ligand>
</feature>
<feature type="binding site" evidence="1">
    <location>
        <position position="356"/>
    </location>
    <ligand>
        <name>GTP</name>
        <dbReference type="ChEBI" id="CHEBI:37565"/>
    </ligand>
</feature>
<feature type="binding site" evidence="1">
    <location>
        <position position="361"/>
    </location>
    <ligand>
        <name>GTP</name>
        <dbReference type="ChEBI" id="CHEBI:37565"/>
    </ligand>
</feature>
<feature type="site" description="Essential for DHBP synthase activity" evidence="1">
    <location>
        <position position="130"/>
    </location>
</feature>
<feature type="site" description="Essential for DHBP synthase activity" evidence="1">
    <location>
        <position position="168"/>
    </location>
</feature>
<organism>
    <name type="scientific">Porphyromonas gingivalis (strain ATCC 33277 / DSM 20709 / CIP 103683 / JCM 12257 / NCTC 11834 / 2561)</name>
    <dbReference type="NCBI Taxonomy" id="431947"/>
    <lineage>
        <taxon>Bacteria</taxon>
        <taxon>Pseudomonadati</taxon>
        <taxon>Bacteroidota</taxon>
        <taxon>Bacteroidia</taxon>
        <taxon>Bacteroidales</taxon>
        <taxon>Porphyromonadaceae</taxon>
        <taxon>Porphyromonas</taxon>
    </lineage>
</organism>
<reference key="1">
    <citation type="journal article" date="2008" name="DNA Res.">
        <title>Determination of the genome sequence of Porphyromonas gingivalis strain ATCC 33277 and genomic comparison with strain W83 revealed extensive genome rearrangements in P. gingivalis.</title>
        <authorList>
            <person name="Naito M."/>
            <person name="Hirakawa H."/>
            <person name="Yamashita A."/>
            <person name="Ohara N."/>
            <person name="Shoji M."/>
            <person name="Yukitake H."/>
            <person name="Nakayama K."/>
            <person name="Toh H."/>
            <person name="Yoshimura F."/>
            <person name="Kuhara S."/>
            <person name="Hattori M."/>
            <person name="Hayashi T."/>
            <person name="Nakayama K."/>
        </authorList>
    </citation>
    <scope>NUCLEOTIDE SEQUENCE [LARGE SCALE GENOMIC DNA]</scope>
    <source>
        <strain>ATCC 33277 / DSM 20709 / CIP 103683 / JCM 12257 / NCTC 11834 / 2561</strain>
    </source>
</reference>
<sequence length="405" mass="45580">MEEIKLNTIEEALEDFKEGKFLIVVDDEDRENEGDFIIAAEKITPDKVNFMMHHGRGVLCAPISEERAHELELEMQVPDNTSVHETPFTVTVDRLGNGCTTGVSMYDRAQTILALADPNTRPSDLGRPGHICPLRARSRGVLRRAGHTEAAVDLARLCGMQPAAALIEIINEDGTMARLPQLWEVSKRFGLKIIAIKDLIAYRLKQESIVEKGVEVDMPTEYGHFRLIPFRQKSNGLEHIALFKGTWDENEPILVRMHSSCATGDIFGSMRCDCGGQLLQAMEKIEKEGKGAIIYLNQEGRGIGLMEKMKAYKLQEQGMDTIDANLCLGHKADERDYGIGAQILRLLGIKKMRLMTNNPVKRIGLEAFGLEIVENIPLETAPNRYNEFYLRTKKERMGHELHNIK</sequence>
<evidence type="ECO:0000255" key="1">
    <source>
        <dbReference type="HAMAP-Rule" id="MF_01283"/>
    </source>
</evidence>
<dbReference type="EC" id="4.1.99.12" evidence="1"/>
<dbReference type="EC" id="3.5.4.25" evidence="1"/>
<dbReference type="EMBL" id="AP009380">
    <property type="protein sequence ID" value="BAG33162.1"/>
    <property type="molecule type" value="Genomic_DNA"/>
</dbReference>
<dbReference type="RefSeq" id="WP_004585136.1">
    <property type="nucleotide sequence ID" value="NZ_CP025930.1"/>
</dbReference>
<dbReference type="SMR" id="B2RIG7"/>
<dbReference type="GeneID" id="29255869"/>
<dbReference type="KEGG" id="pgn:PGN_0643"/>
<dbReference type="eggNOG" id="COG0108">
    <property type="taxonomic scope" value="Bacteria"/>
</dbReference>
<dbReference type="eggNOG" id="COG0807">
    <property type="taxonomic scope" value="Bacteria"/>
</dbReference>
<dbReference type="HOGENOM" id="CLU_020273_1_2_10"/>
<dbReference type="OrthoDB" id="9793111at2"/>
<dbReference type="BioCyc" id="PGIN431947:G1G2V-706-MONOMER"/>
<dbReference type="UniPathway" id="UPA00275">
    <property type="reaction ID" value="UER00399"/>
</dbReference>
<dbReference type="UniPathway" id="UPA00275">
    <property type="reaction ID" value="UER00400"/>
</dbReference>
<dbReference type="Proteomes" id="UP000008842">
    <property type="component" value="Chromosome"/>
</dbReference>
<dbReference type="GO" id="GO:0005829">
    <property type="term" value="C:cytosol"/>
    <property type="evidence" value="ECO:0007669"/>
    <property type="project" value="TreeGrafter"/>
</dbReference>
<dbReference type="GO" id="GO:0008686">
    <property type="term" value="F:3,4-dihydroxy-2-butanone-4-phosphate synthase activity"/>
    <property type="evidence" value="ECO:0007669"/>
    <property type="project" value="UniProtKB-UniRule"/>
</dbReference>
<dbReference type="GO" id="GO:0005525">
    <property type="term" value="F:GTP binding"/>
    <property type="evidence" value="ECO:0007669"/>
    <property type="project" value="UniProtKB-KW"/>
</dbReference>
<dbReference type="GO" id="GO:0003935">
    <property type="term" value="F:GTP cyclohydrolase II activity"/>
    <property type="evidence" value="ECO:0007669"/>
    <property type="project" value="UniProtKB-UniRule"/>
</dbReference>
<dbReference type="GO" id="GO:0000287">
    <property type="term" value="F:magnesium ion binding"/>
    <property type="evidence" value="ECO:0007669"/>
    <property type="project" value="UniProtKB-UniRule"/>
</dbReference>
<dbReference type="GO" id="GO:0030145">
    <property type="term" value="F:manganese ion binding"/>
    <property type="evidence" value="ECO:0007669"/>
    <property type="project" value="UniProtKB-UniRule"/>
</dbReference>
<dbReference type="GO" id="GO:0008270">
    <property type="term" value="F:zinc ion binding"/>
    <property type="evidence" value="ECO:0007669"/>
    <property type="project" value="UniProtKB-UniRule"/>
</dbReference>
<dbReference type="GO" id="GO:0009231">
    <property type="term" value="P:riboflavin biosynthetic process"/>
    <property type="evidence" value="ECO:0007669"/>
    <property type="project" value="UniProtKB-UniRule"/>
</dbReference>
<dbReference type="CDD" id="cd00641">
    <property type="entry name" value="GTP_cyclohydro2"/>
    <property type="match status" value="1"/>
</dbReference>
<dbReference type="FunFam" id="3.40.50.10990:FF:000001">
    <property type="entry name" value="Riboflavin biosynthesis protein RibBA"/>
    <property type="match status" value="1"/>
</dbReference>
<dbReference type="FunFam" id="3.90.870.10:FF:000001">
    <property type="entry name" value="Riboflavin biosynthesis protein RibBA"/>
    <property type="match status" value="1"/>
</dbReference>
<dbReference type="Gene3D" id="3.90.870.10">
    <property type="entry name" value="DHBP synthase"/>
    <property type="match status" value="1"/>
</dbReference>
<dbReference type="Gene3D" id="3.40.50.10990">
    <property type="entry name" value="GTP cyclohydrolase II"/>
    <property type="match status" value="1"/>
</dbReference>
<dbReference type="HAMAP" id="MF_00179">
    <property type="entry name" value="RibA"/>
    <property type="match status" value="1"/>
</dbReference>
<dbReference type="HAMAP" id="MF_01283">
    <property type="entry name" value="RibBA"/>
    <property type="match status" value="1"/>
</dbReference>
<dbReference type="InterPro" id="IPR017945">
    <property type="entry name" value="DHBP_synth_RibB-like_a/b_dom"/>
</dbReference>
<dbReference type="InterPro" id="IPR000422">
    <property type="entry name" value="DHBP_synthase_RibB"/>
</dbReference>
<dbReference type="InterPro" id="IPR032677">
    <property type="entry name" value="GTP_cyclohydro_II"/>
</dbReference>
<dbReference type="InterPro" id="IPR000926">
    <property type="entry name" value="RibA"/>
</dbReference>
<dbReference type="InterPro" id="IPR036144">
    <property type="entry name" value="RibA-like_sf"/>
</dbReference>
<dbReference type="InterPro" id="IPR016299">
    <property type="entry name" value="Riboflavin_synth_RibBA"/>
</dbReference>
<dbReference type="NCBIfam" id="NF001591">
    <property type="entry name" value="PRK00393.1"/>
    <property type="match status" value="1"/>
</dbReference>
<dbReference type="NCBIfam" id="NF006803">
    <property type="entry name" value="PRK09311.1"/>
    <property type="match status" value="1"/>
</dbReference>
<dbReference type="NCBIfam" id="TIGR00505">
    <property type="entry name" value="ribA"/>
    <property type="match status" value="1"/>
</dbReference>
<dbReference type="NCBIfam" id="TIGR00506">
    <property type="entry name" value="ribB"/>
    <property type="match status" value="1"/>
</dbReference>
<dbReference type="PANTHER" id="PTHR21327:SF18">
    <property type="entry name" value="3,4-DIHYDROXY-2-BUTANONE 4-PHOSPHATE SYNTHASE"/>
    <property type="match status" value="1"/>
</dbReference>
<dbReference type="PANTHER" id="PTHR21327">
    <property type="entry name" value="GTP CYCLOHYDROLASE II-RELATED"/>
    <property type="match status" value="1"/>
</dbReference>
<dbReference type="Pfam" id="PF00926">
    <property type="entry name" value="DHBP_synthase"/>
    <property type="match status" value="1"/>
</dbReference>
<dbReference type="Pfam" id="PF00925">
    <property type="entry name" value="GTP_cyclohydro2"/>
    <property type="match status" value="1"/>
</dbReference>
<dbReference type="PIRSF" id="PIRSF001259">
    <property type="entry name" value="RibA"/>
    <property type="match status" value="1"/>
</dbReference>
<dbReference type="SUPFAM" id="SSF142695">
    <property type="entry name" value="RibA-like"/>
    <property type="match status" value="1"/>
</dbReference>
<dbReference type="SUPFAM" id="SSF55821">
    <property type="entry name" value="YrdC/RibB"/>
    <property type="match status" value="1"/>
</dbReference>
<protein>
    <recommendedName>
        <fullName evidence="1">Riboflavin biosynthesis protein RibBA</fullName>
    </recommendedName>
    <domain>
        <recommendedName>
            <fullName evidence="1">3,4-dihydroxy-2-butanone 4-phosphate synthase</fullName>
            <shortName evidence="1">DHBP synthase</shortName>
            <ecNumber evidence="1">4.1.99.12</ecNumber>
        </recommendedName>
    </domain>
    <domain>
        <recommendedName>
            <fullName evidence="1">GTP cyclohydrolase-2</fullName>
            <ecNumber evidence="1">3.5.4.25</ecNumber>
        </recommendedName>
        <alternativeName>
            <fullName evidence="1">GTP cyclohydrolase II</fullName>
        </alternativeName>
    </domain>
</protein>
<keyword id="KW-0342">GTP-binding</keyword>
<keyword id="KW-0378">Hydrolase</keyword>
<keyword id="KW-0456">Lyase</keyword>
<keyword id="KW-0460">Magnesium</keyword>
<keyword id="KW-0464">Manganese</keyword>
<keyword id="KW-0479">Metal-binding</keyword>
<keyword id="KW-0511">Multifunctional enzyme</keyword>
<keyword id="KW-0547">Nucleotide-binding</keyword>
<keyword id="KW-0686">Riboflavin biosynthesis</keyword>
<keyword id="KW-0862">Zinc</keyword>
<accession>B2RIG7</accession>
<name>RIBBA_PORG3</name>
<proteinExistence type="inferred from homology"/>
<comment type="function">
    <text evidence="1">Catalyzes the conversion of D-ribulose 5-phosphate to formate and 3,4-dihydroxy-2-butanone 4-phosphate.</text>
</comment>
<comment type="function">
    <text evidence="1">Catalyzes the conversion of GTP to 2,5-diamino-6-ribosylamino-4(3H)-pyrimidinone 5'-phosphate (DARP), formate and pyrophosphate.</text>
</comment>
<comment type="catalytic activity">
    <reaction evidence="1">
        <text>D-ribulose 5-phosphate = (2S)-2-hydroxy-3-oxobutyl phosphate + formate + H(+)</text>
        <dbReference type="Rhea" id="RHEA:18457"/>
        <dbReference type="ChEBI" id="CHEBI:15378"/>
        <dbReference type="ChEBI" id="CHEBI:15740"/>
        <dbReference type="ChEBI" id="CHEBI:58121"/>
        <dbReference type="ChEBI" id="CHEBI:58830"/>
        <dbReference type="EC" id="4.1.99.12"/>
    </reaction>
</comment>
<comment type="catalytic activity">
    <reaction evidence="1">
        <text>GTP + 4 H2O = 2,5-diamino-6-hydroxy-4-(5-phosphoribosylamino)-pyrimidine + formate + 2 phosphate + 3 H(+)</text>
        <dbReference type="Rhea" id="RHEA:23704"/>
        <dbReference type="ChEBI" id="CHEBI:15377"/>
        <dbReference type="ChEBI" id="CHEBI:15378"/>
        <dbReference type="ChEBI" id="CHEBI:15740"/>
        <dbReference type="ChEBI" id="CHEBI:37565"/>
        <dbReference type="ChEBI" id="CHEBI:43474"/>
        <dbReference type="ChEBI" id="CHEBI:58614"/>
        <dbReference type="EC" id="3.5.4.25"/>
    </reaction>
</comment>
<comment type="cofactor">
    <cofactor evidence="1">
        <name>Mg(2+)</name>
        <dbReference type="ChEBI" id="CHEBI:18420"/>
    </cofactor>
    <cofactor evidence="1">
        <name>Mn(2+)</name>
        <dbReference type="ChEBI" id="CHEBI:29035"/>
    </cofactor>
    <text evidence="1">Binds 2 divalent metal cations per subunit. Magnesium or manganese.</text>
</comment>
<comment type="cofactor">
    <cofactor evidence="1">
        <name>Zn(2+)</name>
        <dbReference type="ChEBI" id="CHEBI:29105"/>
    </cofactor>
    <text evidence="1">Binds 1 zinc ion per subunit.</text>
</comment>
<comment type="pathway">
    <text evidence="1">Cofactor biosynthesis; riboflavin biosynthesis; 2-hydroxy-3-oxobutyl phosphate from D-ribulose 5-phosphate: step 1/1.</text>
</comment>
<comment type="pathway">
    <text evidence="1">Cofactor biosynthesis; riboflavin biosynthesis; 5-amino-6-(D-ribitylamino)uracil from GTP: step 1/4.</text>
</comment>
<comment type="similarity">
    <text evidence="1">In the N-terminal section; belongs to the DHBP synthase family.</text>
</comment>
<comment type="similarity">
    <text evidence="1">In the C-terminal section; belongs to the GTP cyclohydrolase II family.</text>
</comment>